<dbReference type="EC" id="1.11.1.24" evidence="1"/>
<dbReference type="EMBL" id="AE008691">
    <property type="protein sequence ID" value="AAM25344.1"/>
    <property type="molecule type" value="Genomic_DNA"/>
</dbReference>
<dbReference type="RefSeq" id="WP_009610659.1">
    <property type="nucleotide sequence ID" value="NC_003869.1"/>
</dbReference>
<dbReference type="SMR" id="Q8R844"/>
<dbReference type="STRING" id="273068.TTE2186"/>
<dbReference type="KEGG" id="tte:TTE2186"/>
<dbReference type="eggNOG" id="COG0450">
    <property type="taxonomic scope" value="Bacteria"/>
</dbReference>
<dbReference type="HOGENOM" id="CLU_042529_4_4_9"/>
<dbReference type="OrthoDB" id="9812811at2"/>
<dbReference type="Proteomes" id="UP000000555">
    <property type="component" value="Chromosome"/>
</dbReference>
<dbReference type="GO" id="GO:0005829">
    <property type="term" value="C:cytosol"/>
    <property type="evidence" value="ECO:0007669"/>
    <property type="project" value="TreeGrafter"/>
</dbReference>
<dbReference type="GO" id="GO:0008379">
    <property type="term" value="F:thioredoxin peroxidase activity"/>
    <property type="evidence" value="ECO:0007669"/>
    <property type="project" value="TreeGrafter"/>
</dbReference>
<dbReference type="GO" id="GO:0045454">
    <property type="term" value="P:cell redox homeostasis"/>
    <property type="evidence" value="ECO:0007669"/>
    <property type="project" value="TreeGrafter"/>
</dbReference>
<dbReference type="GO" id="GO:0033554">
    <property type="term" value="P:cellular response to stress"/>
    <property type="evidence" value="ECO:0007669"/>
    <property type="project" value="TreeGrafter"/>
</dbReference>
<dbReference type="GO" id="GO:0042744">
    <property type="term" value="P:hydrogen peroxide catabolic process"/>
    <property type="evidence" value="ECO:0007669"/>
    <property type="project" value="TreeGrafter"/>
</dbReference>
<dbReference type="GO" id="GO:0006979">
    <property type="term" value="P:response to oxidative stress"/>
    <property type="evidence" value="ECO:0007669"/>
    <property type="project" value="TreeGrafter"/>
</dbReference>
<dbReference type="CDD" id="cd03016">
    <property type="entry name" value="PRX_1cys"/>
    <property type="match status" value="1"/>
</dbReference>
<dbReference type="FunFam" id="3.40.30.10:FF:000011">
    <property type="entry name" value="Peroxiredoxin PRX1"/>
    <property type="match status" value="1"/>
</dbReference>
<dbReference type="Gene3D" id="3.30.1020.10">
    <property type="entry name" value="Antioxidant, Horf6, Chain A, domain2"/>
    <property type="match status" value="1"/>
</dbReference>
<dbReference type="Gene3D" id="3.40.30.10">
    <property type="entry name" value="Glutaredoxin"/>
    <property type="match status" value="1"/>
</dbReference>
<dbReference type="HAMAP" id="MF_00401">
    <property type="entry name" value="Peroxiredoxin"/>
    <property type="match status" value="1"/>
</dbReference>
<dbReference type="InterPro" id="IPR000866">
    <property type="entry name" value="AhpC/TSA"/>
</dbReference>
<dbReference type="InterPro" id="IPR050217">
    <property type="entry name" value="Peroxiredoxin"/>
</dbReference>
<dbReference type="InterPro" id="IPR024706">
    <property type="entry name" value="Peroxiredoxin_AhpC-typ"/>
</dbReference>
<dbReference type="InterPro" id="IPR019479">
    <property type="entry name" value="Peroxiredoxin_C"/>
</dbReference>
<dbReference type="InterPro" id="IPR022915">
    <property type="entry name" value="Peroxiredoxin_TDXH"/>
</dbReference>
<dbReference type="InterPro" id="IPR045020">
    <property type="entry name" value="PRX_1cys"/>
</dbReference>
<dbReference type="InterPro" id="IPR036249">
    <property type="entry name" value="Thioredoxin-like_sf"/>
</dbReference>
<dbReference type="InterPro" id="IPR013766">
    <property type="entry name" value="Thioredoxin_domain"/>
</dbReference>
<dbReference type="NCBIfam" id="NF009668">
    <property type="entry name" value="PRK13189.1"/>
    <property type="match status" value="1"/>
</dbReference>
<dbReference type="PANTHER" id="PTHR10681">
    <property type="entry name" value="THIOREDOXIN PEROXIDASE"/>
    <property type="match status" value="1"/>
</dbReference>
<dbReference type="PANTHER" id="PTHR10681:SF128">
    <property type="entry name" value="THIOREDOXIN-DEPENDENT PEROXIDE REDUCTASE, MITOCHONDRIAL"/>
    <property type="match status" value="1"/>
</dbReference>
<dbReference type="Pfam" id="PF10417">
    <property type="entry name" value="1-cysPrx_C"/>
    <property type="match status" value="1"/>
</dbReference>
<dbReference type="Pfam" id="PF00578">
    <property type="entry name" value="AhpC-TSA"/>
    <property type="match status" value="1"/>
</dbReference>
<dbReference type="PIRSF" id="PIRSF000239">
    <property type="entry name" value="AHPC"/>
    <property type="match status" value="1"/>
</dbReference>
<dbReference type="SUPFAM" id="SSF52833">
    <property type="entry name" value="Thioredoxin-like"/>
    <property type="match status" value="1"/>
</dbReference>
<dbReference type="PROSITE" id="PS51352">
    <property type="entry name" value="THIOREDOXIN_2"/>
    <property type="match status" value="1"/>
</dbReference>
<proteinExistence type="inferred from homology"/>
<organism>
    <name type="scientific">Caldanaerobacter subterraneus subsp. tengcongensis (strain DSM 15242 / JCM 11007 / NBRC 100824 / MB4)</name>
    <name type="common">Thermoanaerobacter tengcongensis</name>
    <dbReference type="NCBI Taxonomy" id="273068"/>
    <lineage>
        <taxon>Bacteria</taxon>
        <taxon>Bacillati</taxon>
        <taxon>Bacillota</taxon>
        <taxon>Clostridia</taxon>
        <taxon>Thermoanaerobacterales</taxon>
        <taxon>Thermoanaerobacteraceae</taxon>
        <taxon>Caldanaerobacter</taxon>
    </lineage>
</organism>
<reference key="1">
    <citation type="journal article" date="2002" name="Genome Res.">
        <title>A complete sequence of the T. tengcongensis genome.</title>
        <authorList>
            <person name="Bao Q."/>
            <person name="Tian Y."/>
            <person name="Li W."/>
            <person name="Xu Z."/>
            <person name="Xuan Z."/>
            <person name="Hu S."/>
            <person name="Dong W."/>
            <person name="Yang J."/>
            <person name="Chen Y."/>
            <person name="Xue Y."/>
            <person name="Xu Y."/>
            <person name="Lai X."/>
            <person name="Huang L."/>
            <person name="Dong X."/>
            <person name="Ma Y."/>
            <person name="Ling L."/>
            <person name="Tan H."/>
            <person name="Chen R."/>
            <person name="Wang J."/>
            <person name="Yu J."/>
            <person name="Yang H."/>
        </authorList>
    </citation>
    <scope>NUCLEOTIDE SEQUENCE [LARGE SCALE GENOMIC DNA]</scope>
    <source>
        <strain>DSM 15242 / JCM 11007 / NBRC 100824 / MB4</strain>
    </source>
</reference>
<accession>Q8R844</accession>
<sequence>METEAIENIPRVCLPQIGAPAPDFKANSTFGPIKLSDYRGKWVVLFSHPGDFTPVCTTEFIAFTQVYTSFVERNVQLIGLSVDSNPSHLAWVENIYKTTGVEIPFPIIEDKDMRIAKLYGMISPAETSTSAVRAVFIIDDKQILRLILYYPLEIGRNIQEIIRIIDALQTVDKYKVLAPANWYPGMPVIVPPPKTYPELKQRLKNVEGYTCTDWYLCYKKV</sequence>
<comment type="function">
    <text evidence="1">Thiol-specific peroxidase that catalyzes the reduction of hydrogen peroxide and organic hydroperoxides to water and alcohols, respectively. Plays a role in cell protection against oxidative stress by detoxifying peroxides.</text>
</comment>
<comment type="catalytic activity">
    <reaction evidence="1">
        <text>a hydroperoxide + [thioredoxin]-dithiol = an alcohol + [thioredoxin]-disulfide + H2O</text>
        <dbReference type="Rhea" id="RHEA:62620"/>
        <dbReference type="Rhea" id="RHEA-COMP:10698"/>
        <dbReference type="Rhea" id="RHEA-COMP:10700"/>
        <dbReference type="ChEBI" id="CHEBI:15377"/>
        <dbReference type="ChEBI" id="CHEBI:29950"/>
        <dbReference type="ChEBI" id="CHEBI:30879"/>
        <dbReference type="ChEBI" id="CHEBI:35924"/>
        <dbReference type="ChEBI" id="CHEBI:50058"/>
        <dbReference type="EC" id="1.11.1.24"/>
    </reaction>
</comment>
<comment type="subunit">
    <text evidence="1">Homodecamer. Pentamer of dimers that assemble into a ring structure.</text>
</comment>
<comment type="subcellular location">
    <subcellularLocation>
        <location evidence="1">Cytoplasm</location>
    </subcellularLocation>
</comment>
<comment type="miscellaneous">
    <text evidence="1">The active site is a conserved redox-active cysteine residue, the peroxidatic cysteine (C(P)), which makes the nucleophilic attack on the peroxide substrate. The peroxide oxidizes the C(P)-SH to cysteine sulfenic acid (C(P)-SOH), which then reacts with another cysteine residue, the resolving cysteine (C(R)), to form a disulfide bridge. The disulfide is subsequently reduced by an appropriate electron donor to complete the catalytic cycle. Although the primary sequence of this enzyme is similar to those of the 1-Cys Prx6 enzymes, its catalytic properties resemble those of the typical 2-Cys Prxs and C(R) is provided by the other dimeric subunit to form an intersubunit disulfide. The disulfide is subsequently reduced by thioredoxin.</text>
</comment>
<comment type="similarity">
    <text evidence="1">Belongs to the peroxiredoxin family. Prx6 subfamily.</text>
</comment>
<protein>
    <recommendedName>
        <fullName evidence="1">Peroxiredoxin 2</fullName>
        <ecNumber evidence="1">1.11.1.24</ecNumber>
    </recommendedName>
    <alternativeName>
        <fullName evidence="1">Thioredoxin peroxidase 2</fullName>
    </alternativeName>
    <alternativeName>
        <fullName evidence="1">Thioredoxin-dependent peroxiredoxin 1</fullName>
    </alternativeName>
</protein>
<feature type="chain" id="PRO_0000135179" description="Peroxiredoxin 2">
    <location>
        <begin position="1"/>
        <end position="221"/>
    </location>
</feature>
<feature type="domain" description="Thioredoxin" evidence="1">
    <location>
        <begin position="15"/>
        <end position="170"/>
    </location>
</feature>
<feature type="active site" description="Cysteine sulfenic acid (-SOH) intermediate" evidence="1">
    <location>
        <position position="56"/>
    </location>
</feature>
<feature type="binding site" evidence="1">
    <location>
        <position position="133"/>
    </location>
    <ligand>
        <name>substrate</name>
    </ligand>
</feature>
<feature type="disulfide bond" description="Interchain (with C-217); in linked form" evidence="1">
    <location>
        <position position="56"/>
    </location>
</feature>
<feature type="disulfide bond" description="Alternate" evidence="1">
    <location>
        <begin position="211"/>
        <end position="217"/>
    </location>
</feature>
<feature type="disulfide bond" description="Interchain (with C-56); in linked form" evidence="1">
    <location>
        <position position="217"/>
    </location>
</feature>
<evidence type="ECO:0000255" key="1">
    <source>
        <dbReference type="HAMAP-Rule" id="MF_00401"/>
    </source>
</evidence>
<gene>
    <name type="ordered locus">TTE2186</name>
</gene>
<name>TDXH2_CALS4</name>
<keyword id="KW-0049">Antioxidant</keyword>
<keyword id="KW-0963">Cytoplasm</keyword>
<keyword id="KW-1015">Disulfide bond</keyword>
<keyword id="KW-0560">Oxidoreductase</keyword>
<keyword id="KW-0575">Peroxidase</keyword>
<keyword id="KW-0676">Redox-active center</keyword>
<keyword id="KW-1185">Reference proteome</keyword>